<reference key="1">
    <citation type="journal article" date="2007" name="Nat. Biotechnol.">
        <title>Complete genome sequence of the myxobacterium Sorangium cellulosum.</title>
        <authorList>
            <person name="Schneiker S."/>
            <person name="Perlova O."/>
            <person name="Kaiser O."/>
            <person name="Gerth K."/>
            <person name="Alici A."/>
            <person name="Altmeyer M.O."/>
            <person name="Bartels D."/>
            <person name="Bekel T."/>
            <person name="Beyer S."/>
            <person name="Bode E."/>
            <person name="Bode H.B."/>
            <person name="Bolten C.J."/>
            <person name="Choudhuri J.V."/>
            <person name="Doss S."/>
            <person name="Elnakady Y.A."/>
            <person name="Frank B."/>
            <person name="Gaigalat L."/>
            <person name="Goesmann A."/>
            <person name="Groeger C."/>
            <person name="Gross F."/>
            <person name="Jelsbak L."/>
            <person name="Jelsbak L."/>
            <person name="Kalinowski J."/>
            <person name="Kegler C."/>
            <person name="Knauber T."/>
            <person name="Konietzny S."/>
            <person name="Kopp M."/>
            <person name="Krause L."/>
            <person name="Krug D."/>
            <person name="Linke B."/>
            <person name="Mahmud T."/>
            <person name="Martinez-Arias R."/>
            <person name="McHardy A.C."/>
            <person name="Merai M."/>
            <person name="Meyer F."/>
            <person name="Mormann S."/>
            <person name="Munoz-Dorado J."/>
            <person name="Perez J."/>
            <person name="Pradella S."/>
            <person name="Rachid S."/>
            <person name="Raddatz G."/>
            <person name="Rosenau F."/>
            <person name="Rueckert C."/>
            <person name="Sasse F."/>
            <person name="Scharfe M."/>
            <person name="Schuster S.C."/>
            <person name="Suen G."/>
            <person name="Treuner-Lange A."/>
            <person name="Velicer G.J."/>
            <person name="Vorholter F.-J."/>
            <person name="Weissman K.J."/>
            <person name="Welch R.D."/>
            <person name="Wenzel S.C."/>
            <person name="Whitworth D.E."/>
            <person name="Wilhelm S."/>
            <person name="Wittmann C."/>
            <person name="Bloecker H."/>
            <person name="Puehler A."/>
            <person name="Mueller R."/>
        </authorList>
    </citation>
    <scope>NUCLEOTIDE SEQUENCE [LARGE SCALE GENOMIC DNA]</scope>
    <source>
        <strain>So ce56</strain>
    </source>
</reference>
<organism>
    <name type="scientific">Sorangium cellulosum (strain So ce56)</name>
    <name type="common">Polyangium cellulosum (strain So ce56)</name>
    <dbReference type="NCBI Taxonomy" id="448385"/>
    <lineage>
        <taxon>Bacteria</taxon>
        <taxon>Pseudomonadati</taxon>
        <taxon>Myxococcota</taxon>
        <taxon>Polyangia</taxon>
        <taxon>Polyangiales</taxon>
        <taxon>Polyangiaceae</taxon>
        <taxon>Sorangium</taxon>
    </lineage>
</organism>
<sequence>MPKMKTNRAAAKRFKVTGSGRIRRSKGGLNHCMQEKSKKRLRRLRKNDMVDSAMEKRVKLLLPYG</sequence>
<accession>A9ESS9</accession>
<evidence type="ECO:0000255" key="1">
    <source>
        <dbReference type="HAMAP-Rule" id="MF_00514"/>
    </source>
</evidence>
<evidence type="ECO:0000305" key="2"/>
<keyword id="KW-1185">Reference proteome</keyword>
<keyword id="KW-0687">Ribonucleoprotein</keyword>
<keyword id="KW-0689">Ribosomal protein</keyword>
<proteinExistence type="inferred from homology"/>
<dbReference type="EMBL" id="AM746676">
    <property type="protein sequence ID" value="CAN97415.1"/>
    <property type="molecule type" value="Genomic_DNA"/>
</dbReference>
<dbReference type="RefSeq" id="WP_012239854.1">
    <property type="nucleotide sequence ID" value="NC_010162.1"/>
</dbReference>
<dbReference type="SMR" id="A9ESS9"/>
<dbReference type="STRING" id="448385.sce7246"/>
<dbReference type="KEGG" id="scl:sce7246"/>
<dbReference type="eggNOG" id="COG0291">
    <property type="taxonomic scope" value="Bacteria"/>
</dbReference>
<dbReference type="HOGENOM" id="CLU_169643_4_3_7"/>
<dbReference type="OrthoDB" id="9804851at2"/>
<dbReference type="BioCyc" id="SCEL448385:SCE_RS37120-MONOMER"/>
<dbReference type="Proteomes" id="UP000002139">
    <property type="component" value="Chromosome"/>
</dbReference>
<dbReference type="GO" id="GO:0022625">
    <property type="term" value="C:cytosolic large ribosomal subunit"/>
    <property type="evidence" value="ECO:0007669"/>
    <property type="project" value="TreeGrafter"/>
</dbReference>
<dbReference type="GO" id="GO:0003735">
    <property type="term" value="F:structural constituent of ribosome"/>
    <property type="evidence" value="ECO:0007669"/>
    <property type="project" value="InterPro"/>
</dbReference>
<dbReference type="GO" id="GO:0006412">
    <property type="term" value="P:translation"/>
    <property type="evidence" value="ECO:0007669"/>
    <property type="project" value="UniProtKB-UniRule"/>
</dbReference>
<dbReference type="FunFam" id="4.10.410.60:FF:000001">
    <property type="entry name" value="50S ribosomal protein L35"/>
    <property type="match status" value="1"/>
</dbReference>
<dbReference type="Gene3D" id="4.10.410.60">
    <property type="match status" value="1"/>
</dbReference>
<dbReference type="HAMAP" id="MF_00514">
    <property type="entry name" value="Ribosomal_bL35"/>
    <property type="match status" value="1"/>
</dbReference>
<dbReference type="InterPro" id="IPR001706">
    <property type="entry name" value="Ribosomal_bL35"/>
</dbReference>
<dbReference type="InterPro" id="IPR021137">
    <property type="entry name" value="Ribosomal_bL35-like"/>
</dbReference>
<dbReference type="InterPro" id="IPR018265">
    <property type="entry name" value="Ribosomal_bL35_CS"/>
</dbReference>
<dbReference type="InterPro" id="IPR037229">
    <property type="entry name" value="Ribosomal_bL35_sf"/>
</dbReference>
<dbReference type="NCBIfam" id="TIGR00001">
    <property type="entry name" value="rpmI_bact"/>
    <property type="match status" value="1"/>
</dbReference>
<dbReference type="PANTHER" id="PTHR33343">
    <property type="entry name" value="54S RIBOSOMAL PROTEIN BL35M"/>
    <property type="match status" value="1"/>
</dbReference>
<dbReference type="PANTHER" id="PTHR33343:SF1">
    <property type="entry name" value="LARGE RIBOSOMAL SUBUNIT PROTEIN BL35M"/>
    <property type="match status" value="1"/>
</dbReference>
<dbReference type="Pfam" id="PF01632">
    <property type="entry name" value="Ribosomal_L35p"/>
    <property type="match status" value="1"/>
</dbReference>
<dbReference type="PRINTS" id="PR00064">
    <property type="entry name" value="RIBOSOMALL35"/>
</dbReference>
<dbReference type="SUPFAM" id="SSF143034">
    <property type="entry name" value="L35p-like"/>
    <property type="match status" value="1"/>
</dbReference>
<dbReference type="PROSITE" id="PS00936">
    <property type="entry name" value="RIBOSOMAL_L35"/>
    <property type="match status" value="1"/>
</dbReference>
<feature type="chain" id="PRO_1000081630" description="Large ribosomal subunit protein bL35">
    <location>
        <begin position="1"/>
        <end position="65"/>
    </location>
</feature>
<gene>
    <name evidence="1" type="primary">rpmI</name>
    <name type="ordered locus">sce7246</name>
</gene>
<protein>
    <recommendedName>
        <fullName evidence="1">Large ribosomal subunit protein bL35</fullName>
    </recommendedName>
    <alternativeName>
        <fullName evidence="2">50S ribosomal protein L35</fullName>
    </alternativeName>
</protein>
<comment type="similarity">
    <text evidence="1">Belongs to the bacterial ribosomal protein bL35 family.</text>
</comment>
<name>RL35_SORC5</name>